<evidence type="ECO:0000255" key="1">
    <source>
        <dbReference type="HAMAP-Rule" id="MF_00460"/>
    </source>
</evidence>
<evidence type="ECO:0000256" key="2">
    <source>
        <dbReference type="SAM" id="MobiDB-lite"/>
    </source>
</evidence>
<protein>
    <recommendedName>
        <fullName evidence="1">Protein RnfH</fullName>
    </recommendedName>
</protein>
<organism>
    <name type="scientific">Alcanivorax borkumensis (strain ATCC 700651 / DSM 11573 / NCIMB 13689 / SK2)</name>
    <dbReference type="NCBI Taxonomy" id="393595"/>
    <lineage>
        <taxon>Bacteria</taxon>
        <taxon>Pseudomonadati</taxon>
        <taxon>Pseudomonadota</taxon>
        <taxon>Gammaproteobacteria</taxon>
        <taxon>Oceanospirillales</taxon>
        <taxon>Alcanivoracaceae</taxon>
        <taxon>Alcanivorax</taxon>
    </lineage>
</organism>
<comment type="similarity">
    <text evidence="1">Belongs to the UPF0125 (RnfH) family.</text>
</comment>
<reference key="1">
    <citation type="journal article" date="2006" name="Nat. Biotechnol.">
        <title>Genome sequence of the ubiquitous hydrocarbon-degrading marine bacterium Alcanivorax borkumensis.</title>
        <authorList>
            <person name="Schneiker S."/>
            <person name="Martins dos Santos V.A.P."/>
            <person name="Bartels D."/>
            <person name="Bekel T."/>
            <person name="Brecht M."/>
            <person name="Buhrmester J."/>
            <person name="Chernikova T.N."/>
            <person name="Denaro R."/>
            <person name="Ferrer M."/>
            <person name="Gertler C."/>
            <person name="Goesmann A."/>
            <person name="Golyshina O.V."/>
            <person name="Kaminski F."/>
            <person name="Khachane A.N."/>
            <person name="Lang S."/>
            <person name="Linke B."/>
            <person name="McHardy A.C."/>
            <person name="Meyer F."/>
            <person name="Nechitaylo T."/>
            <person name="Puehler A."/>
            <person name="Regenhardt D."/>
            <person name="Rupp O."/>
            <person name="Sabirova J.S."/>
            <person name="Selbitschka W."/>
            <person name="Yakimov M.M."/>
            <person name="Timmis K.N."/>
            <person name="Vorhoelter F.-J."/>
            <person name="Weidner S."/>
            <person name="Kaiser O."/>
            <person name="Golyshin P.N."/>
        </authorList>
    </citation>
    <scope>NUCLEOTIDE SEQUENCE [LARGE SCALE GENOMIC DNA]</scope>
    <source>
        <strain>ATCC 700651 / DSM 11573 / NCIMB 13689 / SK2</strain>
    </source>
</reference>
<accession>Q0VSU3</accession>
<feature type="chain" id="PRO_1000013568" description="Protein RnfH">
    <location>
        <begin position="1"/>
        <end position="104"/>
    </location>
</feature>
<feature type="region of interest" description="Disordered" evidence="2">
    <location>
        <begin position="80"/>
        <end position="104"/>
    </location>
</feature>
<name>RNFH_ALCBS</name>
<keyword id="KW-1185">Reference proteome</keyword>
<dbReference type="EMBL" id="AM286690">
    <property type="protein sequence ID" value="CAL15755.1"/>
    <property type="molecule type" value="Genomic_DNA"/>
</dbReference>
<dbReference type="SMR" id="Q0VSU3"/>
<dbReference type="STRING" id="393595.ABO_0307"/>
<dbReference type="KEGG" id="abo:ABO_0307"/>
<dbReference type="eggNOG" id="COG2914">
    <property type="taxonomic scope" value="Bacteria"/>
</dbReference>
<dbReference type="HOGENOM" id="CLU_150721_1_0_6"/>
<dbReference type="Proteomes" id="UP000008871">
    <property type="component" value="Chromosome"/>
</dbReference>
<dbReference type="Gene3D" id="3.10.20.280">
    <property type="entry name" value="RnfH-like"/>
    <property type="match status" value="1"/>
</dbReference>
<dbReference type="HAMAP" id="MF_00460">
    <property type="entry name" value="UPF0125_RnfH"/>
    <property type="match status" value="1"/>
</dbReference>
<dbReference type="InterPro" id="IPR016155">
    <property type="entry name" value="Mopterin_synth/thiamin_S_b"/>
</dbReference>
<dbReference type="InterPro" id="IPR005346">
    <property type="entry name" value="RnfH"/>
</dbReference>
<dbReference type="InterPro" id="IPR037021">
    <property type="entry name" value="RnfH_sf"/>
</dbReference>
<dbReference type="NCBIfam" id="NF002490">
    <property type="entry name" value="PRK01777.1"/>
    <property type="match status" value="1"/>
</dbReference>
<dbReference type="PANTHER" id="PTHR37483">
    <property type="entry name" value="UPF0125 PROTEIN RATB"/>
    <property type="match status" value="1"/>
</dbReference>
<dbReference type="PANTHER" id="PTHR37483:SF1">
    <property type="entry name" value="UPF0125 PROTEIN RATB"/>
    <property type="match status" value="1"/>
</dbReference>
<dbReference type="Pfam" id="PF03658">
    <property type="entry name" value="Ub-RnfH"/>
    <property type="match status" value="1"/>
</dbReference>
<dbReference type="SUPFAM" id="SSF54285">
    <property type="entry name" value="MoaD/ThiS"/>
    <property type="match status" value="1"/>
</dbReference>
<proteinExistence type="inferred from homology"/>
<gene>
    <name evidence="1" type="primary">rnfH</name>
    <name type="ordered locus">ABO_0307</name>
</gene>
<sequence>MSETMIHVEVVYALPQKQRLIGLDVPDGTSMLDAAKLSGIGEQFADLDLDKAPMGVFGKVVANPAGHILKPGERVEIYRPLTADPKLNRKRRAKEKASAGKASN</sequence>